<evidence type="ECO:0000255" key="1">
    <source>
        <dbReference type="HAMAP-Rule" id="MF_00498"/>
    </source>
</evidence>
<evidence type="ECO:0000256" key="2">
    <source>
        <dbReference type="SAM" id="MobiDB-lite"/>
    </source>
</evidence>
<reference key="1">
    <citation type="submission" date="2007-02" db="EMBL/GenBank/DDBJ databases">
        <title>Complete sequence of Pyrobaculum calidifontis JCM 11548.</title>
        <authorList>
            <consortium name="US DOE Joint Genome Institute"/>
            <person name="Copeland A."/>
            <person name="Lucas S."/>
            <person name="Lapidus A."/>
            <person name="Barry K."/>
            <person name="Glavina del Rio T."/>
            <person name="Dalin E."/>
            <person name="Tice H."/>
            <person name="Pitluck S."/>
            <person name="Chain P."/>
            <person name="Malfatti S."/>
            <person name="Shin M."/>
            <person name="Vergez L."/>
            <person name="Schmutz J."/>
            <person name="Larimer F."/>
            <person name="Land M."/>
            <person name="Hauser L."/>
            <person name="Kyrpides N."/>
            <person name="Mikhailova N."/>
            <person name="Cozen A.E."/>
            <person name="Fitz-Gibbon S.T."/>
            <person name="House C.H."/>
            <person name="Saltikov C."/>
            <person name="Lowe T.M."/>
            <person name="Richardson P."/>
        </authorList>
    </citation>
    <scope>NUCLEOTIDE SEQUENCE [LARGE SCALE GENOMIC DNA]</scope>
    <source>
        <strain>DSM 21063 / JCM 11548 / VA1</strain>
    </source>
</reference>
<feature type="chain" id="PRO_0000378136" description="UPF0179 protein Pcal_2106">
    <location>
        <begin position="1"/>
        <end position="184"/>
    </location>
</feature>
<feature type="region of interest" description="Disordered" evidence="2">
    <location>
        <begin position="146"/>
        <end position="184"/>
    </location>
</feature>
<feature type="compositionally biased region" description="Low complexity" evidence="2">
    <location>
        <begin position="146"/>
        <end position="161"/>
    </location>
</feature>
<comment type="similarity">
    <text evidence="1">Belongs to the UPF0179 family.</text>
</comment>
<dbReference type="EMBL" id="CP000561">
    <property type="protein sequence ID" value="ABO09521.1"/>
    <property type="molecule type" value="Genomic_DNA"/>
</dbReference>
<dbReference type="RefSeq" id="WP_011850779.1">
    <property type="nucleotide sequence ID" value="NC_009073.1"/>
</dbReference>
<dbReference type="STRING" id="410359.Pcal_2106"/>
<dbReference type="GeneID" id="85935694"/>
<dbReference type="KEGG" id="pcl:Pcal_2106"/>
<dbReference type="eggNOG" id="arCOG04477">
    <property type="taxonomic scope" value="Archaea"/>
</dbReference>
<dbReference type="HOGENOM" id="CLU_121764_0_0_2"/>
<dbReference type="OrthoDB" id="24613at2157"/>
<dbReference type="Proteomes" id="UP000001431">
    <property type="component" value="Chromosome"/>
</dbReference>
<dbReference type="HAMAP" id="MF_00498">
    <property type="entry name" value="UPF0179"/>
    <property type="match status" value="1"/>
</dbReference>
<dbReference type="InterPro" id="IPR005369">
    <property type="entry name" value="UPF0179"/>
</dbReference>
<dbReference type="PANTHER" id="PTHR40699">
    <property type="entry name" value="UPF0179 PROTEIN MJ1627"/>
    <property type="match status" value="1"/>
</dbReference>
<dbReference type="PANTHER" id="PTHR40699:SF1">
    <property type="entry name" value="UPF0179 PROTEIN MJ1627"/>
    <property type="match status" value="1"/>
</dbReference>
<dbReference type="Pfam" id="PF03684">
    <property type="entry name" value="UPF0179"/>
    <property type="match status" value="1"/>
</dbReference>
<name>Y2106_PYRCJ</name>
<protein>
    <recommendedName>
        <fullName evidence="1">UPF0179 protein Pcal_2106</fullName>
    </recommendedName>
</protein>
<sequence length="184" mass="19728">MKRIVTLVSREQAEVGHRFRVFGIPDECRECRLYSVCLGRLTPGRSYIVVEVRPSMGQKCKITGGEMVPVVVEETPIVGLLPLNKALEGVVVTYEDECAGCDGCPSNMVSKGEKIKVVKVLGRAKCRGREFAIVEFYALGAPSLSGASSAGISQAPSRVPLSKPPSKSPSPQKSSPRGPTSRLP</sequence>
<organism>
    <name type="scientific">Pyrobaculum calidifontis (strain DSM 21063 / JCM 11548 / VA1)</name>
    <dbReference type="NCBI Taxonomy" id="410359"/>
    <lineage>
        <taxon>Archaea</taxon>
        <taxon>Thermoproteota</taxon>
        <taxon>Thermoprotei</taxon>
        <taxon>Thermoproteales</taxon>
        <taxon>Thermoproteaceae</taxon>
        <taxon>Pyrobaculum</taxon>
    </lineage>
</organism>
<accession>A3MY04</accession>
<proteinExistence type="inferred from homology"/>
<gene>
    <name type="ordered locus">Pcal_2106</name>
</gene>